<keyword id="KW-0749">Sporulation</keyword>
<keyword id="KW-0800">Toxin</keyword>
<keyword id="KW-0843">Virulence</keyword>
<accession>Q45705</accession>
<feature type="chain" id="PRO_0000174076" description="Pesticidal crystal protein Cry8Ba">
    <location>
        <begin position="1"/>
        <end position="1169"/>
    </location>
</feature>
<feature type="region of interest" description="Disordered" evidence="1">
    <location>
        <begin position="1"/>
        <end position="26"/>
    </location>
</feature>
<feature type="compositionally biased region" description="Polar residues" evidence="1">
    <location>
        <begin position="15"/>
        <end position="25"/>
    </location>
</feature>
<dbReference type="EMBL" id="U04365">
    <property type="protein sequence ID" value="AAA21118.1"/>
    <property type="molecule type" value="Genomic_DNA"/>
</dbReference>
<dbReference type="SMR" id="Q45705"/>
<dbReference type="GO" id="GO:0005102">
    <property type="term" value="F:signaling receptor binding"/>
    <property type="evidence" value="ECO:0007669"/>
    <property type="project" value="InterPro"/>
</dbReference>
<dbReference type="GO" id="GO:0090729">
    <property type="term" value="F:toxin activity"/>
    <property type="evidence" value="ECO:0007669"/>
    <property type="project" value="UniProtKB-KW"/>
</dbReference>
<dbReference type="GO" id="GO:0030435">
    <property type="term" value="P:sporulation resulting in formation of a cellular spore"/>
    <property type="evidence" value="ECO:0007669"/>
    <property type="project" value="UniProtKB-KW"/>
</dbReference>
<dbReference type="GO" id="GO:0001907">
    <property type="term" value="P:symbiont-mediated killing of host cell"/>
    <property type="evidence" value="ECO:0007669"/>
    <property type="project" value="InterPro"/>
</dbReference>
<dbReference type="CDD" id="cd04085">
    <property type="entry name" value="delta_endotoxin_C"/>
    <property type="match status" value="1"/>
</dbReference>
<dbReference type="Gene3D" id="2.60.120.260">
    <property type="entry name" value="Galactose-binding domain-like"/>
    <property type="match status" value="2"/>
</dbReference>
<dbReference type="Gene3D" id="2.100.10.10">
    <property type="entry name" value="Pesticidal crystal protein, central domain"/>
    <property type="match status" value="1"/>
</dbReference>
<dbReference type="Gene3D" id="1.20.190.10">
    <property type="entry name" value="Pesticidal crystal protein, N-terminal domain"/>
    <property type="match status" value="1"/>
</dbReference>
<dbReference type="InterPro" id="IPR048645">
    <property type="entry name" value="Cry1Ac-like_dom-VII"/>
</dbReference>
<dbReference type="InterPro" id="IPR041587">
    <property type="entry name" value="Cry_V"/>
</dbReference>
<dbReference type="InterPro" id="IPR008979">
    <property type="entry name" value="Galactose-bd-like_sf"/>
</dbReference>
<dbReference type="InterPro" id="IPR038979">
    <property type="entry name" value="Pest_crys"/>
</dbReference>
<dbReference type="InterPro" id="IPR005638">
    <property type="entry name" value="Pest_crys_dom-III"/>
</dbReference>
<dbReference type="InterPro" id="IPR005639">
    <property type="entry name" value="Pest_crys_dom_I"/>
</dbReference>
<dbReference type="InterPro" id="IPR036716">
    <property type="entry name" value="Pest_crys_N_sf"/>
</dbReference>
<dbReference type="InterPro" id="IPR036399">
    <property type="entry name" value="Pest_cryst_cen_dom_sf"/>
</dbReference>
<dbReference type="InterPro" id="IPR001178">
    <property type="entry name" value="Pest_cryst_dom_II"/>
</dbReference>
<dbReference type="PANTHER" id="PTHR37003">
    <property type="entry name" value="ENDOTOXIN_N DOMAIN-CONTAINING PROTEIN-RELATED"/>
    <property type="match status" value="1"/>
</dbReference>
<dbReference type="PANTHER" id="PTHR37003:SF2">
    <property type="entry name" value="PESTICIDAL CRYSTAL PROTEIN N-TERMINAL DOMAIN-CONTAINING PROTEIN"/>
    <property type="match status" value="1"/>
</dbReference>
<dbReference type="Pfam" id="PF17997">
    <property type="entry name" value="Cry1Ac_D5"/>
    <property type="match status" value="1"/>
</dbReference>
<dbReference type="Pfam" id="PF21463">
    <property type="entry name" value="Cry1Ac_dom-VII"/>
    <property type="match status" value="1"/>
</dbReference>
<dbReference type="Pfam" id="PF03944">
    <property type="entry name" value="Endotoxin_C"/>
    <property type="match status" value="1"/>
</dbReference>
<dbReference type="Pfam" id="PF00555">
    <property type="entry name" value="Endotoxin_M"/>
    <property type="match status" value="1"/>
</dbReference>
<dbReference type="Pfam" id="PF03945">
    <property type="entry name" value="Endotoxin_N"/>
    <property type="match status" value="1"/>
</dbReference>
<dbReference type="SUPFAM" id="SSF51096">
    <property type="entry name" value="delta-Endotoxin (insectocide), middle domain"/>
    <property type="match status" value="1"/>
</dbReference>
<dbReference type="SUPFAM" id="SSF56849">
    <property type="entry name" value="delta-Endotoxin (insectocide), N-terminal domain"/>
    <property type="match status" value="1"/>
</dbReference>
<dbReference type="SUPFAM" id="SSF49785">
    <property type="entry name" value="Galactose-binding domain-like"/>
    <property type="match status" value="2"/>
</dbReference>
<proteinExistence type="evidence at transcript level"/>
<comment type="function">
    <text>Promotes colloidosmotic lysis by binding to the midgut epithelial cells of insects. Active on various scarabaeid beetles.</text>
</comment>
<comment type="developmental stage">
    <text>The crystal protein is produced during sporulation and is accumulated both as an inclusion and as part of the spore coat.</text>
</comment>
<comment type="miscellaneous">
    <text>Toxic segment of the protein is located in the N-terminus.</text>
</comment>
<comment type="similarity">
    <text evidence="2">Belongs to the delta endotoxin family.</text>
</comment>
<reference key="1">
    <citation type="patent" date="1993-08-05" number="WO9315206">
        <title>Process for controlling scarab pests with Bacillus thuringiensis isolates.</title>
        <authorList>
            <person name="Michaels T.E."/>
            <person name="Foncerrada L."/>
            <person name="Narva K.E."/>
        </authorList>
    </citation>
    <scope>NUCLEOTIDE SEQUENCE [GENOMIC DNA]</scope>
    <source>
        <strain>NRRL B-18746 / PS50C</strain>
    </source>
</reference>
<organism>
    <name type="scientific">Bacillus thuringiensis serovar kumamotoensis</name>
    <dbReference type="NCBI Taxonomy" id="132267"/>
    <lineage>
        <taxon>Bacteria</taxon>
        <taxon>Bacillati</taxon>
        <taxon>Bacillota</taxon>
        <taxon>Bacilli</taxon>
        <taxon>Bacillales</taxon>
        <taxon>Bacillaceae</taxon>
        <taxon>Bacillus</taxon>
        <taxon>Bacillus cereus group</taxon>
    </lineage>
</organism>
<evidence type="ECO:0000256" key="1">
    <source>
        <dbReference type="SAM" id="MobiDB-lite"/>
    </source>
</evidence>
<evidence type="ECO:0000305" key="2"/>
<gene>
    <name type="primary">cry8Ba</name>
    <name type="synonym">50C(b)</name>
    <name type="synonym">cryVIIIB(a)</name>
</gene>
<protein>
    <recommendedName>
        <fullName>Pesticidal crystal protein Cry8Ba</fullName>
    </recommendedName>
    <alternativeName>
        <fullName>134 kDa crystal protein</fullName>
    </alternativeName>
    <alternativeName>
        <fullName>Crystaline entomocidal protoxin</fullName>
    </alternativeName>
    <alternativeName>
        <fullName>Insecticidal delta-endotoxin CryVIIIB(a)</fullName>
    </alternativeName>
</protein>
<name>CR8BA_BACUK</name>
<sequence length="1169" mass="133544">MSPNNQNEYEIIDATPSTSVSNDSNRYPFANEPTNALQNMDYKDYLKMSAGNVSEYPGSPEVFLSEQDAVKAAIDIVGKLLTGLGVPFVGPIVSLYTQLIDILWPSKQKSQWEIFMEQVEELINQKIAEYARNKALSELEGLGNNYQLYLTALEEWKENPNGSRALRDVRNRFEILDSLFTQYMPSFRVTNFEVPFLTVYTMAANLHLLLLRDASIFGEEWGLSTSTINNYYNRQMKLTAEYSDHCVKWYETGLAKLKGSSAKQWIDYNQFRREMTLTVLDVVALFSNYDTRTYPLATTAQLTREVYTDPLGAVDVPNIGSWYDKAPSFSEIEKAAIRPPHVFDYITGLTVYTKKRSFTSDRYMRYWAGHQISYKHIGTSSTFTQMYGTNQNLQSTSNFDFTNYDIYKTLSNGAVLLDIVYPGYTYTFFGMPETEFFMVNQLNNTRKTLTYKPASKDIIDRTRDSELELPPETSGQPNYESYSHRLGHITFIYSSSTSTYVPVFSWTHRSADLTNTVKSGEITQIPGGKSSTIGRNTYIIKGRGYTGGDLVALTDRIGSCEFQMIFPESQRFRIRIRYASNETSYISLYGLNQSGTLKFNQTYSNKNENDLTYNDFKYIEYPRVISVNASSNIQRLSIGIQTNTNLFILDRIEFIPVDETYEAETDLEAAKKAVNALFTNTKDGLQPGVTDYEVNQAANLVECLSDDLYPNEKRLLFDAVREAKRLSEARNLLQDPDFQEINGENGWTASTGIEVIEGDAVFKGRYLRLPGAREIDTETYPTYLYQKVEEGVLKPYTRYRLRGFVGSSQGLEIYTIRHQTNRIVKNVPDDLLPDVPPVNNDGRINRCSEQKYVNSRLEVENRSGEAHEFSIPIDTGELDYNENAGIWVGFKITDPEGYATLGNLELVEEGPLSGDALERLQKEEQQWKIQMTRRREETDRRYMASKQAVDRLYADYQDQQLNPNVEITDLTAAQDLIQSIPYVYNEMFPEIPGMNYTKFTELTDRLQQAWGLYDQRNAIPNGDYRNELSNWNTTSGVNVQQINHTSVLVIPNWNEQVSQKFTVQPNQRYVLRVTARKEGVGNGYVSIRDGGNQSETLTFSASDYDTNGMYDTQASNTNGYNTNSVYMIKPAISRKTVDISSVYNQMWIEISETEGTFYIESVELIVDVE</sequence>